<feature type="chain" id="PRO_0000335040" description="Glutamyl-tRNA reductase">
    <location>
        <begin position="1"/>
        <end position="454"/>
    </location>
</feature>
<feature type="active site" description="Nucleophile" evidence="1">
    <location>
        <position position="50"/>
    </location>
</feature>
<feature type="binding site" evidence="1">
    <location>
        <begin position="49"/>
        <end position="52"/>
    </location>
    <ligand>
        <name>substrate</name>
    </ligand>
</feature>
<feature type="binding site" evidence="1">
    <location>
        <position position="109"/>
    </location>
    <ligand>
        <name>substrate</name>
    </ligand>
</feature>
<feature type="binding site" evidence="1">
    <location>
        <begin position="114"/>
        <end position="116"/>
    </location>
    <ligand>
        <name>substrate</name>
    </ligand>
</feature>
<feature type="binding site" evidence="1">
    <location>
        <position position="120"/>
    </location>
    <ligand>
        <name>substrate</name>
    </ligand>
</feature>
<feature type="binding site" evidence="1">
    <location>
        <begin position="189"/>
        <end position="194"/>
    </location>
    <ligand>
        <name>NADP(+)</name>
        <dbReference type="ChEBI" id="CHEBI:58349"/>
    </ligand>
</feature>
<feature type="site" description="Important for activity" evidence="1">
    <location>
        <position position="99"/>
    </location>
</feature>
<proteinExistence type="inferred from homology"/>
<dbReference type="EC" id="1.2.1.70" evidence="1"/>
<dbReference type="EMBL" id="BA000043">
    <property type="protein sequence ID" value="BAD76932.1"/>
    <property type="molecule type" value="Genomic_DNA"/>
</dbReference>
<dbReference type="RefSeq" id="WP_011232123.1">
    <property type="nucleotide sequence ID" value="NC_006510.1"/>
</dbReference>
<dbReference type="SMR" id="Q5KWK4"/>
<dbReference type="STRING" id="235909.GK2647"/>
<dbReference type="KEGG" id="gka:GK2647"/>
<dbReference type="eggNOG" id="COG0373">
    <property type="taxonomic scope" value="Bacteria"/>
</dbReference>
<dbReference type="HOGENOM" id="CLU_035113_2_2_9"/>
<dbReference type="UniPathway" id="UPA00251">
    <property type="reaction ID" value="UER00316"/>
</dbReference>
<dbReference type="Proteomes" id="UP000001172">
    <property type="component" value="Chromosome"/>
</dbReference>
<dbReference type="GO" id="GO:0008883">
    <property type="term" value="F:glutamyl-tRNA reductase activity"/>
    <property type="evidence" value="ECO:0007669"/>
    <property type="project" value="UniProtKB-UniRule"/>
</dbReference>
<dbReference type="GO" id="GO:0050661">
    <property type="term" value="F:NADP binding"/>
    <property type="evidence" value="ECO:0007669"/>
    <property type="project" value="InterPro"/>
</dbReference>
<dbReference type="GO" id="GO:0019353">
    <property type="term" value="P:protoporphyrinogen IX biosynthetic process from glutamate"/>
    <property type="evidence" value="ECO:0007669"/>
    <property type="project" value="TreeGrafter"/>
</dbReference>
<dbReference type="CDD" id="cd05213">
    <property type="entry name" value="NAD_bind_Glutamyl_tRNA_reduct"/>
    <property type="match status" value="1"/>
</dbReference>
<dbReference type="FunFam" id="3.30.460.30:FF:000001">
    <property type="entry name" value="Glutamyl-tRNA reductase"/>
    <property type="match status" value="1"/>
</dbReference>
<dbReference type="FunFam" id="3.40.50.720:FF:000031">
    <property type="entry name" value="Glutamyl-tRNA reductase"/>
    <property type="match status" value="1"/>
</dbReference>
<dbReference type="Gene3D" id="3.30.460.30">
    <property type="entry name" value="Glutamyl-tRNA reductase, N-terminal domain"/>
    <property type="match status" value="1"/>
</dbReference>
<dbReference type="Gene3D" id="3.40.50.720">
    <property type="entry name" value="NAD(P)-binding Rossmann-like Domain"/>
    <property type="match status" value="1"/>
</dbReference>
<dbReference type="HAMAP" id="MF_00087">
    <property type="entry name" value="Glu_tRNA_reductase"/>
    <property type="match status" value="1"/>
</dbReference>
<dbReference type="InterPro" id="IPR000343">
    <property type="entry name" value="4pyrrol_synth_GluRdtase"/>
</dbReference>
<dbReference type="InterPro" id="IPR015896">
    <property type="entry name" value="4pyrrol_synth_GluRdtase_dimer"/>
</dbReference>
<dbReference type="InterPro" id="IPR015895">
    <property type="entry name" value="4pyrrol_synth_GluRdtase_N"/>
</dbReference>
<dbReference type="InterPro" id="IPR018214">
    <property type="entry name" value="GluRdtase_CS"/>
</dbReference>
<dbReference type="InterPro" id="IPR036453">
    <property type="entry name" value="GluRdtase_dimer_dom_sf"/>
</dbReference>
<dbReference type="InterPro" id="IPR036343">
    <property type="entry name" value="GluRdtase_N_sf"/>
</dbReference>
<dbReference type="InterPro" id="IPR036291">
    <property type="entry name" value="NAD(P)-bd_dom_sf"/>
</dbReference>
<dbReference type="InterPro" id="IPR006151">
    <property type="entry name" value="Shikm_DH/Glu-tRNA_Rdtase"/>
</dbReference>
<dbReference type="NCBIfam" id="TIGR01035">
    <property type="entry name" value="hemA"/>
    <property type="match status" value="1"/>
</dbReference>
<dbReference type="NCBIfam" id="NF000744">
    <property type="entry name" value="PRK00045.1-3"/>
    <property type="match status" value="1"/>
</dbReference>
<dbReference type="PANTHER" id="PTHR43013">
    <property type="entry name" value="GLUTAMYL-TRNA REDUCTASE"/>
    <property type="match status" value="1"/>
</dbReference>
<dbReference type="PANTHER" id="PTHR43013:SF1">
    <property type="entry name" value="GLUTAMYL-TRNA REDUCTASE"/>
    <property type="match status" value="1"/>
</dbReference>
<dbReference type="Pfam" id="PF00745">
    <property type="entry name" value="GlutR_dimer"/>
    <property type="match status" value="1"/>
</dbReference>
<dbReference type="Pfam" id="PF05201">
    <property type="entry name" value="GlutR_N"/>
    <property type="match status" value="1"/>
</dbReference>
<dbReference type="Pfam" id="PF01488">
    <property type="entry name" value="Shikimate_DH"/>
    <property type="match status" value="1"/>
</dbReference>
<dbReference type="PIRSF" id="PIRSF000445">
    <property type="entry name" value="4pyrrol_synth_GluRdtase"/>
    <property type="match status" value="1"/>
</dbReference>
<dbReference type="SUPFAM" id="SSF69742">
    <property type="entry name" value="Glutamyl tRNA-reductase catalytic, N-terminal domain"/>
    <property type="match status" value="1"/>
</dbReference>
<dbReference type="SUPFAM" id="SSF69075">
    <property type="entry name" value="Glutamyl tRNA-reductase dimerization domain"/>
    <property type="match status" value="1"/>
</dbReference>
<dbReference type="SUPFAM" id="SSF51735">
    <property type="entry name" value="NAD(P)-binding Rossmann-fold domains"/>
    <property type="match status" value="1"/>
</dbReference>
<dbReference type="PROSITE" id="PS00747">
    <property type="entry name" value="GLUTR"/>
    <property type="match status" value="1"/>
</dbReference>
<gene>
    <name evidence="1" type="primary">hemA</name>
    <name type="ordered locus">GK2647</name>
</gene>
<sequence length="454" mass="49697">MQIVVVGVDYKTAPVEIREKLAFAEAELGAAMKQLAKQKSVLENVIVSTCNRTEVYAVVDQLHTGRYYMKAFLAEWFGVKVEAIAPYLRVLEGEAAIKHLFRVAAGLDSMVLGETQILGQVKDSYLLAQEVGTSGTIFNHLFKQAVTFAKRAHSETGIGAHAVSVSYAAVELAKKIFGRLAGKHVLIIGAGKMGTLAAQNLYGSGVGKVTVVNRTLEKAKQLAKQFAGEAKPLGELSCALLEADIVISSTGAKGYILTKEMVAPLEKMRKGRPLFMVDIAVPRDLDPALADLETVFLYDIDDLQDVVAANLAERQKAAARIETMIEAELMAFSQWLQTLGVVPVIAALREKALAIQAETMKSLERKLPHLSERDWKVLNKHTKSIINQLLRDPILQAKELAAGPNAEEALLLFMKIFNIEDAVKAERHIEQAKSVQCDEQDAEAVRAARPSWQL</sequence>
<protein>
    <recommendedName>
        <fullName evidence="1">Glutamyl-tRNA reductase</fullName>
        <shortName evidence="1">GluTR</shortName>
        <ecNumber evidence="1">1.2.1.70</ecNumber>
    </recommendedName>
</protein>
<comment type="function">
    <text evidence="1">Catalyzes the NADPH-dependent reduction of glutamyl-tRNA(Glu) to glutamate 1-semialdehyde (GSA).</text>
</comment>
<comment type="catalytic activity">
    <reaction evidence="1">
        <text>(S)-4-amino-5-oxopentanoate + tRNA(Glu) + NADP(+) = L-glutamyl-tRNA(Glu) + NADPH + H(+)</text>
        <dbReference type="Rhea" id="RHEA:12344"/>
        <dbReference type="Rhea" id="RHEA-COMP:9663"/>
        <dbReference type="Rhea" id="RHEA-COMP:9680"/>
        <dbReference type="ChEBI" id="CHEBI:15378"/>
        <dbReference type="ChEBI" id="CHEBI:57501"/>
        <dbReference type="ChEBI" id="CHEBI:57783"/>
        <dbReference type="ChEBI" id="CHEBI:58349"/>
        <dbReference type="ChEBI" id="CHEBI:78442"/>
        <dbReference type="ChEBI" id="CHEBI:78520"/>
        <dbReference type="EC" id="1.2.1.70"/>
    </reaction>
</comment>
<comment type="pathway">
    <text evidence="1">Porphyrin-containing compound metabolism; protoporphyrin-IX biosynthesis; 5-aminolevulinate from L-glutamyl-tRNA(Glu): step 1/2.</text>
</comment>
<comment type="subunit">
    <text evidence="1">Homodimer.</text>
</comment>
<comment type="domain">
    <text evidence="1">Possesses an unusual extended V-shaped dimeric structure with each monomer consisting of three distinct domains arranged along a curved 'spinal' alpha-helix. The N-terminal catalytic domain specifically recognizes the glutamate moiety of the substrate. The second domain is the NADPH-binding domain, and the third C-terminal domain is responsible for dimerization.</text>
</comment>
<comment type="miscellaneous">
    <text evidence="1">During catalysis, the active site Cys acts as a nucleophile attacking the alpha-carbonyl group of tRNA-bound glutamate with the formation of a thioester intermediate between enzyme and glutamate, and the concomitant release of tRNA(Glu). The thioester intermediate is finally reduced by direct hydride transfer from NADPH, to form the product GSA.</text>
</comment>
<comment type="similarity">
    <text evidence="1">Belongs to the glutamyl-tRNA reductase family.</text>
</comment>
<keyword id="KW-0521">NADP</keyword>
<keyword id="KW-0560">Oxidoreductase</keyword>
<keyword id="KW-0627">Porphyrin biosynthesis</keyword>
<keyword id="KW-1185">Reference proteome</keyword>
<organism>
    <name type="scientific">Geobacillus kaustophilus (strain HTA426)</name>
    <dbReference type="NCBI Taxonomy" id="235909"/>
    <lineage>
        <taxon>Bacteria</taxon>
        <taxon>Bacillati</taxon>
        <taxon>Bacillota</taxon>
        <taxon>Bacilli</taxon>
        <taxon>Bacillales</taxon>
        <taxon>Anoxybacillaceae</taxon>
        <taxon>Geobacillus</taxon>
        <taxon>Geobacillus thermoleovorans group</taxon>
    </lineage>
</organism>
<name>HEM1_GEOKA</name>
<accession>Q5KWK4</accession>
<reference key="1">
    <citation type="journal article" date="2004" name="Nucleic Acids Res.">
        <title>Thermoadaptation trait revealed by the genome sequence of thermophilic Geobacillus kaustophilus.</title>
        <authorList>
            <person name="Takami H."/>
            <person name="Takaki Y."/>
            <person name="Chee G.-J."/>
            <person name="Nishi S."/>
            <person name="Shimamura S."/>
            <person name="Suzuki H."/>
            <person name="Matsui S."/>
            <person name="Uchiyama I."/>
        </authorList>
    </citation>
    <scope>NUCLEOTIDE SEQUENCE [LARGE SCALE GENOMIC DNA]</scope>
    <source>
        <strain>HTA426</strain>
    </source>
</reference>
<evidence type="ECO:0000255" key="1">
    <source>
        <dbReference type="HAMAP-Rule" id="MF_00087"/>
    </source>
</evidence>